<dbReference type="EMBL" id="KR019779">
    <property type="protein sequence ID" value="AKI29293.1"/>
    <property type="molecule type" value="mRNA"/>
</dbReference>
<dbReference type="SMR" id="A0A0G2UGT2"/>
<dbReference type="GO" id="GO:0005534">
    <property type="term" value="F:galactose binding"/>
    <property type="evidence" value="ECO:0000314"/>
    <property type="project" value="UniProtKB"/>
</dbReference>
<dbReference type="GO" id="GO:0042834">
    <property type="term" value="F:peptidoglycan binding"/>
    <property type="evidence" value="ECO:0000314"/>
    <property type="project" value="UniProtKB"/>
</dbReference>
<dbReference type="GO" id="GO:0098630">
    <property type="term" value="P:aggregation of unicellular organisms"/>
    <property type="evidence" value="ECO:0000314"/>
    <property type="project" value="UniProtKB"/>
</dbReference>
<dbReference type="GO" id="GO:0050832">
    <property type="term" value="P:defense response to fungus"/>
    <property type="evidence" value="ECO:0000314"/>
    <property type="project" value="UniProtKB"/>
</dbReference>
<dbReference type="GO" id="GO:0050830">
    <property type="term" value="P:defense response to Gram-positive bacterium"/>
    <property type="evidence" value="ECO:0000314"/>
    <property type="project" value="UniProtKB"/>
</dbReference>
<dbReference type="GO" id="GO:0016045">
    <property type="term" value="P:detection of bacterium"/>
    <property type="evidence" value="ECO:0000314"/>
    <property type="project" value="UniProtKB"/>
</dbReference>
<dbReference type="GO" id="GO:0034117">
    <property type="term" value="P:erythrocyte aggregation"/>
    <property type="evidence" value="ECO:0000314"/>
    <property type="project" value="UniProtKB"/>
</dbReference>
<dbReference type="GO" id="GO:0045087">
    <property type="term" value="P:innate immune response"/>
    <property type="evidence" value="ECO:0000305"/>
    <property type="project" value="UniProtKB"/>
</dbReference>
<dbReference type="GO" id="GO:0051260">
    <property type="term" value="P:protein homooligomerization"/>
    <property type="evidence" value="ECO:0000314"/>
    <property type="project" value="UniProtKB"/>
</dbReference>
<dbReference type="GO" id="GO:0140460">
    <property type="term" value="P:response to Gram-negative bacterium"/>
    <property type="evidence" value="ECO:0000270"/>
    <property type="project" value="UniProtKB"/>
</dbReference>
<dbReference type="CDD" id="cd23417">
    <property type="entry name" value="beta-trefoil_Ricin_MytiLec-like"/>
    <property type="match status" value="1"/>
</dbReference>
<dbReference type="Gene3D" id="2.80.10.50">
    <property type="match status" value="1"/>
</dbReference>
<organism evidence="12">
    <name type="scientific">Mytilus trossulus</name>
    <name type="common">Blue mussel</name>
    <dbReference type="NCBI Taxonomy" id="6551"/>
    <lineage>
        <taxon>Eukaryota</taxon>
        <taxon>Metazoa</taxon>
        <taxon>Spiralia</taxon>
        <taxon>Lophotrochozoa</taxon>
        <taxon>Mollusca</taxon>
        <taxon>Bivalvia</taxon>
        <taxon>Autobranchia</taxon>
        <taxon>Pteriomorphia</taxon>
        <taxon>Mytilida</taxon>
        <taxon>Mytiloidea</taxon>
        <taxon>Mytilidae</taxon>
        <taxon>Mytilinae</taxon>
        <taxon>Mytilus</taxon>
    </lineage>
</organism>
<sequence>MTTFLIKHKASGKYFHPKGGTSNPPNGTNLVLHSDIHERMYFQFEVVNERWRYIKHVASEKIVHPFGGKADPLNGTNMVLHQDRHDRALFAMDFFNDNIRHKGGKYIHPKGGSKNPSNGNLTVMHGDEHGAMEFIFVSPKNKDKRVLVYA</sequence>
<feature type="chain" id="PRO_0000453718" description="D-galactose-binding lectin">
    <location>
        <begin position="1"/>
        <end position="150"/>
    </location>
</feature>
<feature type="binding site" evidence="1">
    <location>
        <position position="16"/>
    </location>
    <ligand>
        <name>D-galactose</name>
        <dbReference type="ChEBI" id="CHEBI:4139"/>
        <label>1</label>
    </ligand>
</feature>
<feature type="binding site" evidence="1">
    <location>
        <position position="19"/>
    </location>
    <ligand>
        <name>D-galactose</name>
        <dbReference type="ChEBI" id="CHEBI:4139"/>
        <label>1</label>
    </ligand>
</feature>
<feature type="binding site" evidence="1">
    <location>
        <begin position="35"/>
        <end position="37"/>
    </location>
    <ligand>
        <name>D-galactose</name>
        <dbReference type="ChEBI" id="CHEBI:4139"/>
        <label>1</label>
    </ligand>
</feature>
<feature type="binding site" evidence="1">
    <location>
        <position position="64"/>
    </location>
    <ligand>
        <name>D-galactose</name>
        <dbReference type="ChEBI" id="CHEBI:4139"/>
        <label>2</label>
    </ligand>
</feature>
<feature type="binding site" evidence="1">
    <location>
        <position position="67"/>
    </location>
    <ligand>
        <name>D-galactose</name>
        <dbReference type="ChEBI" id="CHEBI:4139"/>
        <label>2</label>
    </ligand>
</feature>
<feature type="binding site" evidence="1">
    <location>
        <begin position="83"/>
        <end position="85"/>
    </location>
    <ligand>
        <name>D-galactose</name>
        <dbReference type="ChEBI" id="CHEBI:4139"/>
        <label>2</label>
    </ligand>
</feature>
<feature type="binding site" evidence="1">
    <location>
        <position position="108"/>
    </location>
    <ligand>
        <name>D-galactose</name>
        <dbReference type="ChEBI" id="CHEBI:4139"/>
        <label>3</label>
    </ligand>
</feature>
<feature type="binding site" evidence="1">
    <location>
        <position position="111"/>
    </location>
    <ligand>
        <name>D-galactose</name>
        <dbReference type="ChEBI" id="CHEBI:4139"/>
        <label>3</label>
    </ligand>
</feature>
<feature type="binding site" evidence="1">
    <location>
        <begin position="127"/>
        <end position="129"/>
    </location>
    <ligand>
        <name>D-galactose</name>
        <dbReference type="ChEBI" id="CHEBI:4139"/>
        <label>3</label>
    </ligand>
</feature>
<feature type="glycosylation site" description="N-linked (GlcNAc...) asparagine" evidence="2">
    <location>
        <position position="26"/>
    </location>
</feature>
<feature type="glycosylation site" description="N-linked (GlcNAc...) asparagine" evidence="2">
    <location>
        <position position="74"/>
    </location>
</feature>
<feature type="glycosylation site" description="N-linked (GlcNAc...) asparagine" evidence="2">
    <location>
        <position position="118"/>
    </location>
</feature>
<protein>
    <recommendedName>
        <fullName evidence="7">D-galactose-binding lectin</fullName>
    </recommendedName>
    <alternativeName>
        <fullName evidence="7 9 10 12">GalNAc/Gal-specific lectin</fullName>
    </alternativeName>
    <alternativeName>
        <fullName evidence="7 8 9 10">MTL</fullName>
    </alternativeName>
</protein>
<name>LEC_MYTTR</name>
<accession>A0A0G2UGT2</accession>
<evidence type="ECO:0000250" key="1">
    <source>
        <dbReference type="UniProtKB" id="H2FH31"/>
    </source>
</evidence>
<evidence type="ECO:0000255" key="2">
    <source>
        <dbReference type="PROSITE-ProRule" id="PRU00498"/>
    </source>
</evidence>
<evidence type="ECO:0000269" key="3">
    <source>
    </source>
</evidence>
<evidence type="ECO:0000269" key="4">
    <source>
    </source>
</evidence>
<evidence type="ECO:0000269" key="5">
    <source>
    </source>
</evidence>
<evidence type="ECO:0000269" key="6">
    <source ref="2"/>
</evidence>
<evidence type="ECO:0000303" key="7">
    <source>
    </source>
</evidence>
<evidence type="ECO:0000303" key="8">
    <source>
    </source>
</evidence>
<evidence type="ECO:0000303" key="9">
    <source>
    </source>
</evidence>
<evidence type="ECO:0000303" key="10">
    <source ref="2"/>
</evidence>
<evidence type="ECO:0000305" key="11">
    <source>
    </source>
</evidence>
<evidence type="ECO:0000312" key="12">
    <source>
        <dbReference type="EMBL" id="AKI29293.1"/>
    </source>
</evidence>
<proteinExistence type="evidence at protein level"/>
<reference evidence="12" key="1">
    <citation type="journal article" date="2016" name="Fish Shellfish Immunol.">
        <title>A new Gal/GalNAc-specific lectin from the mussel Mytilus trossulus: Structure, tissue specificity, antimicrobial and antifungal activity.</title>
        <authorList>
            <person name="Chikalovets I.V."/>
            <person name="Kovalchuk S.N."/>
            <person name="Litovchenko A.P."/>
            <person name="Molchanova V.I."/>
            <person name="Pivkin M.V."/>
            <person name="Chernikov O.V."/>
        </authorList>
    </citation>
    <scope>NUCLEOTIDE SEQUENCE [MRNA]</scope>
    <scope>FUNCTION</scope>
    <scope>ACTIVITY REGULATION</scope>
    <scope>TISSUE SPECIFICITY</scope>
    <scope>INDUCTION</scope>
    <scope>PTM</scope>
    <scope>CIRCULAR DICHROISM ANALYSIS</scope>
    <source>
        <tissue evidence="7">Mantle</tissue>
    </source>
</reference>
<reference key="2">
    <citation type="journal article" date="2013" name="Chem. Nat. Comp.">
        <title>Isolation and general characteristics of lectin from the mussel Mytilus trossulus.</title>
        <authorList>
            <person name="Chikalovets I.V."/>
            <person name="Kondrashina A.S."/>
            <person name="Chernikov O.V."/>
            <person name="Molchanova V.I."/>
            <person name="Lukyanov P.A."/>
        </authorList>
    </citation>
    <scope>FUNCTION</scope>
    <scope>ACTIVITY REGULATION</scope>
    <scope>BIOPHYSICOCHEMICAL PROPERTIES</scope>
    <scope>TISSUE SPECIFICITY</scope>
</reference>
<reference key="3">
    <citation type="journal article" date="2019" name="Molecules">
        <title>Activity Dependence of a Novel Lectin Family on Structure and Carbohydrate-Binding Properties.</title>
        <authorList>
            <person name="Chikalovets I."/>
            <person name="Filshtein A."/>
            <person name="Molchanova V."/>
            <person name="Mizgina T."/>
            <person name="Lukyanov P."/>
            <person name="Nedashkovskaya O."/>
            <person name="Hua K.F."/>
            <person name="Chernikov O."/>
        </authorList>
    </citation>
    <scope>FUNCTION</scope>
    <scope>BIOTECHNOLOGY</scope>
    <scope>REVIEW</scope>
</reference>
<reference key="4">
    <citation type="journal article" date="2019" name="Protein Expr. Purif.">
        <title>Expression and purification of a new lectin from mussel Mytilus trossulus.</title>
        <authorList>
            <person name="Golotin V.A."/>
            <person name="Filshtein A.P."/>
            <person name="Chikalovets I.V."/>
            <person name="Yu K.N."/>
            <person name="Molchanova V.I."/>
            <person name="Chernikov O.V."/>
        </authorList>
    </citation>
    <scope>FUNCTION</scope>
    <scope>SUBUNIT</scope>
    <scope>TISSUE SPECIFICITY</scope>
    <scope>CIRCULAR DICHROISM ANALYSIS</scope>
</reference>
<comment type="function">
    <text evidence="3 4 5 6">D-galactose-binding lectin (PubMed:26802895, Ref.2). Binds both alpha and beta anomer of galactose (Gal). Binds strongly to branched beta-Gal-terminated glycans and weakly to unbranched glycans with alpha-Gal on the end of chains (PubMed:31905927). Has strong affinity for both Gal and GalNAc. Binds glycoproteins containing mucin-type chains. Has hemagglutinating activity towards human group A erythrocytes (Ref.2). Has hemagglutinating activity towards rabbit erythrocytes (PubMed:30292806). Agglutinates V.proteolyticus bacteria. Binds strongly to fungi including species from genera Aspergillus, Alternaria, Fusarium and Haematonectria, and to a lesser extent to fungi from genera Trichoderma. Decreases conidia germination and hyphal growth of fungi (PubMed:26802895). At high concentration, stimulates secretion of cytokines TNF-alpha and IFN-gamma from human peripheral blood cells, and at low concentration reduces hyperexpression of cytokine IL-10 in these cells, indicative of immunomodulatory capability. However, has no effect on IL-4 production (Ref.2). Recognizes pathogen-associated molecular patterns (PAMPs) and binds to peptidoglycan from S.aureus, but has only little binding to beta-1,3-glucan from E.gracilis and lipopolysaccharide (LPS) from E.coli (PubMed:31905927). May be involved in innate immunity acting as an antibacterial or antifungal agent recognizing carbohydrate ligands on the surface of pathogens (PubMed:26802895, PubMed:31905927).</text>
</comment>
<comment type="activity regulation">
    <text evidence="3 6">Hemagglutinating activity does not require Ca(2+) ions. Hemagglutinating activity is inhibited by porcine stomach mucin (PSM), bovine submaxillary mucin (BSM) and fetuin (Ref.2). Agglutination of V.proteolyticus bacteria is inhibited by D-galactose, but not by D-glucose. Fungal binding is inhibited by D-galactose, but not by pathogen-associated molecular patterns (PAMPs) including lipopolysaccharide (LPS), peptidoglycan and beta-glucan (PubMed:26802895).</text>
</comment>
<comment type="biophysicochemical properties">
    <phDependence>
        <text evidence="6">Optimum pH is 9-10 for hemagglutinating activity. The activity is decreased by 25% at pH 6.0 and by 50% at pH 4.0.</text>
    </phDependence>
    <temperatureDependence>
        <text evidence="6">Thermally labile. Complete loss of hemagglutinating activity after incubation at 60 degrees Celsius for 30 minutes.</text>
    </temperatureDependence>
</comment>
<comment type="subunit">
    <text evidence="4">Oligomerizes in solution.</text>
</comment>
<comment type="tissue specificity">
    <text evidence="3 4 6">Expressed in mantle (PubMed:26802895, PubMed:30292806, Ref.2). Expressed 51 and 1.6 fold in mantle and gonads, respectively, relative to that in hemocytes. Expressed at a much lower level in other tissues tested including gill, muscle and hepatopancreas (PubMed:26802895).</text>
</comment>
<comment type="induction">
    <text evidence="3">Up-regulated expression in the mantle following V.proteolyticus bacterial challenge reaching the maximum expression at 24 hours (about 1.5-fold) post-injection and then decreasing back to the initial level at 48 hours post-injection.</text>
</comment>
<comment type="PTM">
    <text evidence="3">The N-terminus is blocked.</text>
</comment>
<comment type="biotechnology">
    <text evidence="11">This protein may have potential in cancer diagnosis and treatment.</text>
</comment>
<keyword id="KW-0325">Glycoprotein</keyword>
<keyword id="KW-0348">Hemagglutinin</keyword>
<keyword id="KW-0430">Lectin</keyword>